<keyword id="KW-0249">Electron transport</keyword>
<keyword id="KW-0472">Membrane</keyword>
<keyword id="KW-0496">Mitochondrion</keyword>
<keyword id="KW-0999">Mitochondrion inner membrane</keyword>
<keyword id="KW-0520">NAD</keyword>
<keyword id="KW-0679">Respiratory chain</keyword>
<keyword id="KW-1278">Translocase</keyword>
<keyword id="KW-0812">Transmembrane</keyword>
<keyword id="KW-1133">Transmembrane helix</keyword>
<keyword id="KW-0813">Transport</keyword>
<keyword id="KW-0830">Ubiquinone</keyword>
<organism>
    <name type="scientific">Megaptera novaeangliae</name>
    <name type="common">Humpback whale</name>
    <name type="synonym">Balaena novaeangliae</name>
    <dbReference type="NCBI Taxonomy" id="9773"/>
    <lineage>
        <taxon>Eukaryota</taxon>
        <taxon>Metazoa</taxon>
        <taxon>Chordata</taxon>
        <taxon>Craniata</taxon>
        <taxon>Vertebrata</taxon>
        <taxon>Euteleostomi</taxon>
        <taxon>Mammalia</taxon>
        <taxon>Eutheria</taxon>
        <taxon>Laurasiatheria</taxon>
        <taxon>Artiodactyla</taxon>
        <taxon>Whippomorpha</taxon>
        <taxon>Cetacea</taxon>
        <taxon>Mysticeti</taxon>
        <taxon>Balaenopteridae</taxon>
        <taxon>Megaptera</taxon>
    </lineage>
</organism>
<proteinExistence type="inferred from homology"/>
<name>NU4LM_MEGNO</name>
<protein>
    <recommendedName>
        <fullName>NADH-ubiquinone oxidoreductase chain 4L</fullName>
        <ecNumber>7.1.1.2</ecNumber>
    </recommendedName>
    <alternativeName>
        <fullName>NADH dehydrogenase subunit 4L</fullName>
    </alternativeName>
</protein>
<comment type="function">
    <text evidence="1">Core subunit of the mitochondrial membrane respiratory chain NADH dehydrogenase (Complex I) which catalyzes electron transfer from NADH through the respiratory chain, using ubiquinone as an electron acceptor. Part of the enzyme membrane arm which is embedded in the lipid bilayer and involved in proton translocation.</text>
</comment>
<comment type="catalytic activity">
    <reaction evidence="1">
        <text>a ubiquinone + NADH + 5 H(+)(in) = a ubiquinol + NAD(+) + 4 H(+)(out)</text>
        <dbReference type="Rhea" id="RHEA:29091"/>
        <dbReference type="Rhea" id="RHEA-COMP:9565"/>
        <dbReference type="Rhea" id="RHEA-COMP:9566"/>
        <dbReference type="ChEBI" id="CHEBI:15378"/>
        <dbReference type="ChEBI" id="CHEBI:16389"/>
        <dbReference type="ChEBI" id="CHEBI:17976"/>
        <dbReference type="ChEBI" id="CHEBI:57540"/>
        <dbReference type="ChEBI" id="CHEBI:57945"/>
        <dbReference type="EC" id="7.1.1.2"/>
    </reaction>
    <physiologicalReaction direction="left-to-right" evidence="1">
        <dbReference type="Rhea" id="RHEA:29092"/>
    </physiologicalReaction>
</comment>
<comment type="subunit">
    <text evidence="2">Core subunit of respiratory chain NADH dehydrogenase (Complex I) which is composed of 45 different subunits.</text>
</comment>
<comment type="subcellular location">
    <subcellularLocation>
        <location evidence="2">Mitochondrion inner membrane</location>
        <topology evidence="3">Multi-pass membrane protein</topology>
    </subcellularLocation>
</comment>
<comment type="similarity">
    <text evidence="4">Belongs to the complex I subunit 4L family.</text>
</comment>
<reference key="1">
    <citation type="journal article" date="2004" name="Mol. Phylogenet. Evol.">
        <title>Phylogeny of mysticete whales based on mitochondrial and nuclear data.</title>
        <authorList>
            <person name="Rychel A.L."/>
            <person name="Reeder T.W."/>
            <person name="Berta A."/>
        </authorList>
    </citation>
    <scope>NUCLEOTIDE SEQUENCE [GENOMIC DNA]</scope>
</reference>
<reference key="2">
    <citation type="journal article" date="2005" name="Syst. Biol.">
        <title>Mitochondrial phylogenetics and evolution of mysticete whales.</title>
        <authorList>
            <person name="Sasaki T."/>
            <person name="Nikaido M."/>
            <person name="Hamilton H."/>
            <person name="Goto M."/>
            <person name="Kato H."/>
            <person name="Kanda N."/>
            <person name="Pastene L.A."/>
            <person name="Cao Y."/>
            <person name="Fordyce R.E."/>
            <person name="Hasegawa M."/>
            <person name="Okada N."/>
        </authorList>
    </citation>
    <scope>NUCLEOTIDE SEQUENCE [GENOMIC DNA]</scope>
</reference>
<feature type="chain" id="PRO_0000275054" description="NADH-ubiquinone oxidoreductase chain 4L">
    <location>
        <begin position="1"/>
        <end position="98"/>
    </location>
</feature>
<feature type="transmembrane region" description="Helical" evidence="3">
    <location>
        <begin position="1"/>
        <end position="21"/>
    </location>
</feature>
<feature type="transmembrane region" description="Helical" evidence="3">
    <location>
        <begin position="29"/>
        <end position="49"/>
    </location>
</feature>
<feature type="transmembrane region" description="Helical" evidence="3">
    <location>
        <begin position="61"/>
        <end position="81"/>
    </location>
</feature>
<sequence>MTLIHMNILMAFSMSLVGLLMYRSHLMSALLCLEGMMLSLFVLATLTILSSHFTLANMMPIILLVFAACEAAIGLALLVMVSNTYGTDYVQNLNLLQC</sequence>
<gene>
    <name type="primary">MT-ND4L</name>
    <name type="synonym">MTND4L</name>
    <name type="synonym">NADH4L</name>
    <name type="synonym">ND4L</name>
</gene>
<accession>Q69B84</accession>
<evidence type="ECO:0000250" key="1">
    <source>
        <dbReference type="UniProtKB" id="P03901"/>
    </source>
</evidence>
<evidence type="ECO:0000250" key="2">
    <source>
        <dbReference type="UniProtKB" id="P03902"/>
    </source>
</evidence>
<evidence type="ECO:0000255" key="3"/>
<evidence type="ECO:0000305" key="4"/>
<dbReference type="EC" id="7.1.1.2"/>
<dbReference type="EMBL" id="AY398624">
    <property type="protein sequence ID" value="AAR33055.1"/>
    <property type="molecule type" value="Genomic_DNA"/>
</dbReference>
<dbReference type="EMBL" id="AP006467">
    <property type="protein sequence ID" value="BAD91689.1"/>
    <property type="molecule type" value="Genomic_DNA"/>
</dbReference>
<dbReference type="RefSeq" id="YP_220727.1">
    <property type="nucleotide sequence ID" value="NC_006927.1"/>
</dbReference>
<dbReference type="SMR" id="Q69B84"/>
<dbReference type="GeneID" id="3337167"/>
<dbReference type="CTD" id="4539"/>
<dbReference type="GO" id="GO:0005743">
    <property type="term" value="C:mitochondrial inner membrane"/>
    <property type="evidence" value="ECO:0000250"/>
    <property type="project" value="UniProtKB"/>
</dbReference>
<dbReference type="GO" id="GO:0045271">
    <property type="term" value="C:respiratory chain complex I"/>
    <property type="evidence" value="ECO:0000250"/>
    <property type="project" value="UniProtKB"/>
</dbReference>
<dbReference type="GO" id="GO:0008137">
    <property type="term" value="F:NADH dehydrogenase (ubiquinone) activity"/>
    <property type="evidence" value="ECO:0000250"/>
    <property type="project" value="UniProtKB"/>
</dbReference>
<dbReference type="GO" id="GO:0042773">
    <property type="term" value="P:ATP synthesis coupled electron transport"/>
    <property type="evidence" value="ECO:0007669"/>
    <property type="project" value="InterPro"/>
</dbReference>
<dbReference type="FunFam" id="1.10.287.3510:FF:000002">
    <property type="entry name" value="NADH-ubiquinone oxidoreductase chain 4L"/>
    <property type="match status" value="1"/>
</dbReference>
<dbReference type="Gene3D" id="1.10.287.3510">
    <property type="match status" value="1"/>
</dbReference>
<dbReference type="InterPro" id="IPR001133">
    <property type="entry name" value="NADH_UbQ_OxRdtase_chain4L/K"/>
</dbReference>
<dbReference type="InterPro" id="IPR039428">
    <property type="entry name" value="NUOK/Mnh_C1-like"/>
</dbReference>
<dbReference type="PANTHER" id="PTHR11434:SF0">
    <property type="entry name" value="NADH-UBIQUINONE OXIDOREDUCTASE CHAIN 4L"/>
    <property type="match status" value="1"/>
</dbReference>
<dbReference type="PANTHER" id="PTHR11434">
    <property type="entry name" value="NADH-UBIQUINONE OXIDOREDUCTASE SUBUNIT ND4L"/>
    <property type="match status" value="1"/>
</dbReference>
<dbReference type="Pfam" id="PF00420">
    <property type="entry name" value="Oxidored_q2"/>
    <property type="match status" value="1"/>
</dbReference>
<geneLocation type="mitochondrion"/>